<gene>
    <name evidence="1" type="primary">panD</name>
    <name type="ordered locus">XOO2361</name>
</gene>
<accession>Q5H0A6</accession>
<organism>
    <name type="scientific">Xanthomonas oryzae pv. oryzae (strain KACC10331 / KXO85)</name>
    <dbReference type="NCBI Taxonomy" id="291331"/>
    <lineage>
        <taxon>Bacteria</taxon>
        <taxon>Pseudomonadati</taxon>
        <taxon>Pseudomonadota</taxon>
        <taxon>Gammaproteobacteria</taxon>
        <taxon>Lysobacterales</taxon>
        <taxon>Lysobacteraceae</taxon>
        <taxon>Xanthomonas</taxon>
    </lineage>
</organism>
<comment type="function">
    <text evidence="1">Catalyzes the pyruvoyl-dependent decarboxylation of aspartate to produce beta-alanine.</text>
</comment>
<comment type="catalytic activity">
    <reaction evidence="1">
        <text>L-aspartate + H(+) = beta-alanine + CO2</text>
        <dbReference type="Rhea" id="RHEA:19497"/>
        <dbReference type="ChEBI" id="CHEBI:15378"/>
        <dbReference type="ChEBI" id="CHEBI:16526"/>
        <dbReference type="ChEBI" id="CHEBI:29991"/>
        <dbReference type="ChEBI" id="CHEBI:57966"/>
        <dbReference type="EC" id="4.1.1.11"/>
    </reaction>
</comment>
<comment type="cofactor">
    <cofactor evidence="1">
        <name>pyruvate</name>
        <dbReference type="ChEBI" id="CHEBI:15361"/>
    </cofactor>
    <text evidence="1">Binds 1 pyruvoyl group covalently per subunit.</text>
</comment>
<comment type="pathway">
    <text evidence="1">Cofactor biosynthesis; (R)-pantothenate biosynthesis; beta-alanine from L-aspartate: step 1/1.</text>
</comment>
<comment type="subunit">
    <text evidence="1">Heterooctamer of four alpha and four beta subunits.</text>
</comment>
<comment type="subcellular location">
    <subcellularLocation>
        <location evidence="1">Cytoplasm</location>
    </subcellularLocation>
</comment>
<comment type="PTM">
    <text evidence="1">Is synthesized initially as an inactive proenzyme, which is activated by self-cleavage at a specific serine bond to produce a beta-subunit with a hydroxyl group at its C-terminus and an alpha-subunit with a pyruvoyl group at its N-terminus.</text>
</comment>
<comment type="similarity">
    <text evidence="1">Belongs to the PanD family.</text>
</comment>
<comment type="sequence caution" evidence="2">
    <conflict type="erroneous initiation">
        <sequence resource="EMBL-CDS" id="AAW75615"/>
    </conflict>
</comment>
<proteinExistence type="inferred from homology"/>
<protein>
    <recommendedName>
        <fullName evidence="1">Aspartate 1-decarboxylase</fullName>
        <ecNumber evidence="1">4.1.1.11</ecNumber>
    </recommendedName>
    <alternativeName>
        <fullName evidence="1">Aspartate alpha-decarboxylase</fullName>
    </alternativeName>
    <component>
        <recommendedName>
            <fullName evidence="1">Aspartate 1-decarboxylase beta chain</fullName>
        </recommendedName>
    </component>
    <component>
        <recommendedName>
            <fullName evidence="1">Aspartate 1-decarboxylase alpha chain</fullName>
        </recommendedName>
    </component>
</protein>
<dbReference type="EC" id="4.1.1.11" evidence="1"/>
<dbReference type="EMBL" id="AE013598">
    <property type="protein sequence ID" value="AAW75615.1"/>
    <property type="status" value="ALT_INIT"/>
    <property type="molecule type" value="Genomic_DNA"/>
</dbReference>
<dbReference type="SMR" id="Q5H0A6"/>
<dbReference type="STRING" id="291331.XOO2361"/>
<dbReference type="KEGG" id="xoo:XOO2361"/>
<dbReference type="HOGENOM" id="CLU_115305_2_1_6"/>
<dbReference type="UniPathway" id="UPA00028">
    <property type="reaction ID" value="UER00002"/>
</dbReference>
<dbReference type="Proteomes" id="UP000006735">
    <property type="component" value="Chromosome"/>
</dbReference>
<dbReference type="GO" id="GO:0005829">
    <property type="term" value="C:cytosol"/>
    <property type="evidence" value="ECO:0007669"/>
    <property type="project" value="TreeGrafter"/>
</dbReference>
<dbReference type="GO" id="GO:0004068">
    <property type="term" value="F:aspartate 1-decarboxylase activity"/>
    <property type="evidence" value="ECO:0007669"/>
    <property type="project" value="UniProtKB-UniRule"/>
</dbReference>
<dbReference type="GO" id="GO:0006523">
    <property type="term" value="P:alanine biosynthetic process"/>
    <property type="evidence" value="ECO:0007669"/>
    <property type="project" value="InterPro"/>
</dbReference>
<dbReference type="GO" id="GO:0015940">
    <property type="term" value="P:pantothenate biosynthetic process"/>
    <property type="evidence" value="ECO:0007669"/>
    <property type="project" value="UniProtKB-UniRule"/>
</dbReference>
<dbReference type="CDD" id="cd06919">
    <property type="entry name" value="Asp_decarbox"/>
    <property type="match status" value="1"/>
</dbReference>
<dbReference type="Gene3D" id="2.40.40.20">
    <property type="match status" value="1"/>
</dbReference>
<dbReference type="HAMAP" id="MF_00446">
    <property type="entry name" value="PanD"/>
    <property type="match status" value="1"/>
</dbReference>
<dbReference type="InterPro" id="IPR009010">
    <property type="entry name" value="Asp_de-COase-like_dom_sf"/>
</dbReference>
<dbReference type="InterPro" id="IPR003190">
    <property type="entry name" value="Asp_decarbox"/>
</dbReference>
<dbReference type="NCBIfam" id="TIGR00223">
    <property type="entry name" value="panD"/>
    <property type="match status" value="1"/>
</dbReference>
<dbReference type="PANTHER" id="PTHR21012">
    <property type="entry name" value="ASPARTATE 1-DECARBOXYLASE"/>
    <property type="match status" value="1"/>
</dbReference>
<dbReference type="PANTHER" id="PTHR21012:SF0">
    <property type="entry name" value="ASPARTATE 1-DECARBOXYLASE"/>
    <property type="match status" value="1"/>
</dbReference>
<dbReference type="Pfam" id="PF02261">
    <property type="entry name" value="Asp_decarbox"/>
    <property type="match status" value="1"/>
</dbReference>
<dbReference type="PIRSF" id="PIRSF006246">
    <property type="entry name" value="Asp_decarbox"/>
    <property type="match status" value="1"/>
</dbReference>
<dbReference type="SUPFAM" id="SSF50692">
    <property type="entry name" value="ADC-like"/>
    <property type="match status" value="1"/>
</dbReference>
<sequence length="126" mass="13626">MHLSLLKAKIHRATVTHAELNYEGSIAIDGLLLEATGIREFEQVHIWDVTNGARFSTYAIRAEDGSGIMSLNGGAARHVQVGDLIIVAAFASMSEDEAKTFKPNLVYVNARNAISHTNHSIPTQAA</sequence>
<evidence type="ECO:0000255" key="1">
    <source>
        <dbReference type="HAMAP-Rule" id="MF_00446"/>
    </source>
</evidence>
<evidence type="ECO:0000305" key="2"/>
<reference key="1">
    <citation type="journal article" date="2005" name="Nucleic Acids Res.">
        <title>The genome sequence of Xanthomonas oryzae pathovar oryzae KACC10331, the bacterial blight pathogen of rice.</title>
        <authorList>
            <person name="Lee B.-M."/>
            <person name="Park Y.-J."/>
            <person name="Park D.-S."/>
            <person name="Kang H.-W."/>
            <person name="Kim J.-G."/>
            <person name="Song E.-S."/>
            <person name="Park I.-C."/>
            <person name="Yoon U.-H."/>
            <person name="Hahn J.-H."/>
            <person name="Koo B.-S."/>
            <person name="Lee G.-B."/>
            <person name="Kim H."/>
            <person name="Park H.-S."/>
            <person name="Yoon K.-O."/>
            <person name="Kim J.-H."/>
            <person name="Jung C.-H."/>
            <person name="Koh N.-H."/>
            <person name="Seo J.-S."/>
            <person name="Go S.-J."/>
        </authorList>
    </citation>
    <scope>NUCLEOTIDE SEQUENCE [LARGE SCALE GENOMIC DNA]</scope>
    <source>
        <strain>KACC10331 / KXO85</strain>
    </source>
</reference>
<name>PAND_XANOR</name>
<feature type="chain" id="PRO_0000023191" description="Aspartate 1-decarboxylase beta chain" evidence="1">
    <location>
        <begin position="1"/>
        <end position="24"/>
    </location>
</feature>
<feature type="chain" id="PRO_0000023192" description="Aspartate 1-decarboxylase alpha chain" evidence="1">
    <location>
        <begin position="25"/>
        <end position="126"/>
    </location>
</feature>
<feature type="active site" description="Schiff-base intermediate with substrate; via pyruvic acid" evidence="1">
    <location>
        <position position="25"/>
    </location>
</feature>
<feature type="active site" description="Proton donor" evidence="1">
    <location>
        <position position="58"/>
    </location>
</feature>
<feature type="binding site" evidence="1">
    <location>
        <position position="57"/>
    </location>
    <ligand>
        <name>substrate</name>
    </ligand>
</feature>
<feature type="binding site" evidence="1">
    <location>
        <begin position="73"/>
        <end position="75"/>
    </location>
    <ligand>
        <name>substrate</name>
    </ligand>
</feature>
<feature type="modified residue" description="Pyruvic acid (Ser)" evidence="1">
    <location>
        <position position="25"/>
    </location>
</feature>
<keyword id="KW-0068">Autocatalytic cleavage</keyword>
<keyword id="KW-0963">Cytoplasm</keyword>
<keyword id="KW-0210">Decarboxylase</keyword>
<keyword id="KW-0456">Lyase</keyword>
<keyword id="KW-0566">Pantothenate biosynthesis</keyword>
<keyword id="KW-0670">Pyruvate</keyword>
<keyword id="KW-1185">Reference proteome</keyword>
<keyword id="KW-0704">Schiff base</keyword>
<keyword id="KW-0865">Zymogen</keyword>